<accession>Q5YPG3</accession>
<gene>
    <name evidence="1" type="primary">fusA</name>
    <name type="ordered locus">NFA_50760</name>
</gene>
<name>EFG_NOCFA</name>
<evidence type="ECO:0000255" key="1">
    <source>
        <dbReference type="HAMAP-Rule" id="MF_00054"/>
    </source>
</evidence>
<reference key="1">
    <citation type="journal article" date="2004" name="Proc. Natl. Acad. Sci. U.S.A.">
        <title>The complete genomic sequence of Nocardia farcinica IFM 10152.</title>
        <authorList>
            <person name="Ishikawa J."/>
            <person name="Yamashita A."/>
            <person name="Mikami Y."/>
            <person name="Hoshino Y."/>
            <person name="Kurita H."/>
            <person name="Hotta K."/>
            <person name="Shiba T."/>
            <person name="Hattori M."/>
        </authorList>
    </citation>
    <scope>NUCLEOTIDE SEQUENCE [LARGE SCALE GENOMIC DNA]</scope>
    <source>
        <strain>IFM 10152</strain>
    </source>
</reference>
<keyword id="KW-0963">Cytoplasm</keyword>
<keyword id="KW-0251">Elongation factor</keyword>
<keyword id="KW-0342">GTP-binding</keyword>
<keyword id="KW-0547">Nucleotide-binding</keyword>
<keyword id="KW-0648">Protein biosynthesis</keyword>
<keyword id="KW-1185">Reference proteome</keyword>
<comment type="function">
    <text evidence="1">Catalyzes the GTP-dependent ribosomal translocation step during translation elongation. During this step, the ribosome changes from the pre-translocational (PRE) to the post-translocational (POST) state as the newly formed A-site-bound peptidyl-tRNA and P-site-bound deacylated tRNA move to the P and E sites, respectively. Catalyzes the coordinated movement of the two tRNA molecules, the mRNA and conformational changes in the ribosome.</text>
</comment>
<comment type="subcellular location">
    <subcellularLocation>
        <location evidence="1">Cytoplasm</location>
    </subcellularLocation>
</comment>
<comment type="similarity">
    <text evidence="1">Belongs to the TRAFAC class translation factor GTPase superfamily. Classic translation factor GTPase family. EF-G/EF-2 subfamily.</text>
</comment>
<organism>
    <name type="scientific">Nocardia farcinica (strain IFM 10152)</name>
    <dbReference type="NCBI Taxonomy" id="247156"/>
    <lineage>
        <taxon>Bacteria</taxon>
        <taxon>Bacillati</taxon>
        <taxon>Actinomycetota</taxon>
        <taxon>Actinomycetes</taxon>
        <taxon>Mycobacteriales</taxon>
        <taxon>Nocardiaceae</taxon>
        <taxon>Nocardia</taxon>
    </lineage>
</organism>
<feature type="chain" id="PRO_0000091170" description="Elongation factor G">
    <location>
        <begin position="1"/>
        <end position="700"/>
    </location>
</feature>
<feature type="domain" description="tr-type G">
    <location>
        <begin position="10"/>
        <end position="286"/>
    </location>
</feature>
<feature type="binding site" evidence="1">
    <location>
        <begin position="19"/>
        <end position="26"/>
    </location>
    <ligand>
        <name>GTP</name>
        <dbReference type="ChEBI" id="CHEBI:37565"/>
    </ligand>
</feature>
<feature type="binding site" evidence="1">
    <location>
        <begin position="83"/>
        <end position="87"/>
    </location>
    <ligand>
        <name>GTP</name>
        <dbReference type="ChEBI" id="CHEBI:37565"/>
    </ligand>
</feature>
<feature type="binding site" evidence="1">
    <location>
        <begin position="137"/>
        <end position="140"/>
    </location>
    <ligand>
        <name>GTP</name>
        <dbReference type="ChEBI" id="CHEBI:37565"/>
    </ligand>
</feature>
<proteinExistence type="inferred from homology"/>
<dbReference type="EMBL" id="AP006618">
    <property type="protein sequence ID" value="BAD59928.1"/>
    <property type="molecule type" value="Genomic_DNA"/>
</dbReference>
<dbReference type="RefSeq" id="WP_011211610.1">
    <property type="nucleotide sequence ID" value="NC_006361.1"/>
</dbReference>
<dbReference type="SMR" id="Q5YPG3"/>
<dbReference type="STRING" id="247156.NFA_50760"/>
<dbReference type="GeneID" id="61135652"/>
<dbReference type="KEGG" id="nfa:NFA_50760"/>
<dbReference type="eggNOG" id="COG0480">
    <property type="taxonomic scope" value="Bacteria"/>
</dbReference>
<dbReference type="HOGENOM" id="CLU_002794_4_1_11"/>
<dbReference type="OrthoDB" id="9801472at2"/>
<dbReference type="Proteomes" id="UP000006820">
    <property type="component" value="Chromosome"/>
</dbReference>
<dbReference type="GO" id="GO:0005737">
    <property type="term" value="C:cytoplasm"/>
    <property type="evidence" value="ECO:0007669"/>
    <property type="project" value="UniProtKB-SubCell"/>
</dbReference>
<dbReference type="GO" id="GO:0005525">
    <property type="term" value="F:GTP binding"/>
    <property type="evidence" value="ECO:0007669"/>
    <property type="project" value="UniProtKB-UniRule"/>
</dbReference>
<dbReference type="GO" id="GO:0003924">
    <property type="term" value="F:GTPase activity"/>
    <property type="evidence" value="ECO:0007669"/>
    <property type="project" value="InterPro"/>
</dbReference>
<dbReference type="GO" id="GO:0003746">
    <property type="term" value="F:translation elongation factor activity"/>
    <property type="evidence" value="ECO:0007669"/>
    <property type="project" value="UniProtKB-UniRule"/>
</dbReference>
<dbReference type="GO" id="GO:0032790">
    <property type="term" value="P:ribosome disassembly"/>
    <property type="evidence" value="ECO:0007669"/>
    <property type="project" value="TreeGrafter"/>
</dbReference>
<dbReference type="CDD" id="cd01886">
    <property type="entry name" value="EF-G"/>
    <property type="match status" value="1"/>
</dbReference>
<dbReference type="CDD" id="cd16262">
    <property type="entry name" value="EFG_III"/>
    <property type="match status" value="1"/>
</dbReference>
<dbReference type="CDD" id="cd01434">
    <property type="entry name" value="EFG_mtEFG1_IV"/>
    <property type="match status" value="1"/>
</dbReference>
<dbReference type="CDD" id="cd03713">
    <property type="entry name" value="EFG_mtEFG_C"/>
    <property type="match status" value="1"/>
</dbReference>
<dbReference type="CDD" id="cd04088">
    <property type="entry name" value="EFG_mtEFG_II"/>
    <property type="match status" value="1"/>
</dbReference>
<dbReference type="FunFam" id="2.40.30.10:FF:000006">
    <property type="entry name" value="Elongation factor G"/>
    <property type="match status" value="1"/>
</dbReference>
<dbReference type="FunFam" id="3.30.230.10:FF:000003">
    <property type="entry name" value="Elongation factor G"/>
    <property type="match status" value="1"/>
</dbReference>
<dbReference type="FunFam" id="3.30.70.240:FF:000001">
    <property type="entry name" value="Elongation factor G"/>
    <property type="match status" value="1"/>
</dbReference>
<dbReference type="FunFam" id="3.30.70.870:FF:000001">
    <property type="entry name" value="Elongation factor G"/>
    <property type="match status" value="1"/>
</dbReference>
<dbReference type="FunFam" id="3.40.50.300:FF:000029">
    <property type="entry name" value="Elongation factor G"/>
    <property type="match status" value="1"/>
</dbReference>
<dbReference type="Gene3D" id="3.30.230.10">
    <property type="match status" value="1"/>
</dbReference>
<dbReference type="Gene3D" id="3.30.70.240">
    <property type="match status" value="1"/>
</dbReference>
<dbReference type="Gene3D" id="3.30.70.870">
    <property type="entry name" value="Elongation Factor G (Translational Gtpase), domain 3"/>
    <property type="match status" value="1"/>
</dbReference>
<dbReference type="Gene3D" id="3.40.50.300">
    <property type="entry name" value="P-loop containing nucleotide triphosphate hydrolases"/>
    <property type="match status" value="1"/>
</dbReference>
<dbReference type="Gene3D" id="2.40.30.10">
    <property type="entry name" value="Translation factors"/>
    <property type="match status" value="1"/>
</dbReference>
<dbReference type="HAMAP" id="MF_00054_B">
    <property type="entry name" value="EF_G_EF_2_B"/>
    <property type="match status" value="1"/>
</dbReference>
<dbReference type="InterPro" id="IPR041095">
    <property type="entry name" value="EFG_II"/>
</dbReference>
<dbReference type="InterPro" id="IPR009022">
    <property type="entry name" value="EFG_III"/>
</dbReference>
<dbReference type="InterPro" id="IPR035647">
    <property type="entry name" value="EFG_III/V"/>
</dbReference>
<dbReference type="InterPro" id="IPR047872">
    <property type="entry name" value="EFG_IV"/>
</dbReference>
<dbReference type="InterPro" id="IPR035649">
    <property type="entry name" value="EFG_V"/>
</dbReference>
<dbReference type="InterPro" id="IPR000640">
    <property type="entry name" value="EFG_V-like"/>
</dbReference>
<dbReference type="InterPro" id="IPR004161">
    <property type="entry name" value="EFTu-like_2"/>
</dbReference>
<dbReference type="InterPro" id="IPR031157">
    <property type="entry name" value="G_TR_CS"/>
</dbReference>
<dbReference type="InterPro" id="IPR027417">
    <property type="entry name" value="P-loop_NTPase"/>
</dbReference>
<dbReference type="InterPro" id="IPR020568">
    <property type="entry name" value="Ribosomal_Su5_D2-typ_SF"/>
</dbReference>
<dbReference type="InterPro" id="IPR014721">
    <property type="entry name" value="Ribsml_uS5_D2-typ_fold_subgr"/>
</dbReference>
<dbReference type="InterPro" id="IPR005225">
    <property type="entry name" value="Small_GTP-bd"/>
</dbReference>
<dbReference type="InterPro" id="IPR000795">
    <property type="entry name" value="T_Tr_GTP-bd_dom"/>
</dbReference>
<dbReference type="InterPro" id="IPR009000">
    <property type="entry name" value="Transl_B-barrel_sf"/>
</dbReference>
<dbReference type="InterPro" id="IPR004540">
    <property type="entry name" value="Transl_elong_EFG/EF2"/>
</dbReference>
<dbReference type="InterPro" id="IPR005517">
    <property type="entry name" value="Transl_elong_EFG/EF2_IV"/>
</dbReference>
<dbReference type="NCBIfam" id="TIGR00484">
    <property type="entry name" value="EF-G"/>
    <property type="match status" value="1"/>
</dbReference>
<dbReference type="NCBIfam" id="NF009381">
    <property type="entry name" value="PRK12740.1-5"/>
    <property type="match status" value="1"/>
</dbReference>
<dbReference type="NCBIfam" id="TIGR00231">
    <property type="entry name" value="small_GTP"/>
    <property type="match status" value="1"/>
</dbReference>
<dbReference type="PANTHER" id="PTHR43261:SF1">
    <property type="entry name" value="RIBOSOME-RELEASING FACTOR 2, MITOCHONDRIAL"/>
    <property type="match status" value="1"/>
</dbReference>
<dbReference type="PANTHER" id="PTHR43261">
    <property type="entry name" value="TRANSLATION ELONGATION FACTOR G-RELATED"/>
    <property type="match status" value="1"/>
</dbReference>
<dbReference type="Pfam" id="PF00679">
    <property type="entry name" value="EFG_C"/>
    <property type="match status" value="1"/>
</dbReference>
<dbReference type="Pfam" id="PF14492">
    <property type="entry name" value="EFG_III"/>
    <property type="match status" value="1"/>
</dbReference>
<dbReference type="Pfam" id="PF03764">
    <property type="entry name" value="EFG_IV"/>
    <property type="match status" value="1"/>
</dbReference>
<dbReference type="Pfam" id="PF00009">
    <property type="entry name" value="GTP_EFTU"/>
    <property type="match status" value="1"/>
</dbReference>
<dbReference type="Pfam" id="PF03144">
    <property type="entry name" value="GTP_EFTU_D2"/>
    <property type="match status" value="1"/>
</dbReference>
<dbReference type="PRINTS" id="PR00315">
    <property type="entry name" value="ELONGATNFCT"/>
</dbReference>
<dbReference type="SMART" id="SM00838">
    <property type="entry name" value="EFG_C"/>
    <property type="match status" value="1"/>
</dbReference>
<dbReference type="SMART" id="SM00889">
    <property type="entry name" value="EFG_IV"/>
    <property type="match status" value="1"/>
</dbReference>
<dbReference type="SUPFAM" id="SSF54980">
    <property type="entry name" value="EF-G C-terminal domain-like"/>
    <property type="match status" value="2"/>
</dbReference>
<dbReference type="SUPFAM" id="SSF52540">
    <property type="entry name" value="P-loop containing nucleoside triphosphate hydrolases"/>
    <property type="match status" value="1"/>
</dbReference>
<dbReference type="SUPFAM" id="SSF54211">
    <property type="entry name" value="Ribosomal protein S5 domain 2-like"/>
    <property type="match status" value="1"/>
</dbReference>
<dbReference type="SUPFAM" id="SSF50447">
    <property type="entry name" value="Translation proteins"/>
    <property type="match status" value="1"/>
</dbReference>
<dbReference type="PROSITE" id="PS00301">
    <property type="entry name" value="G_TR_1"/>
    <property type="match status" value="1"/>
</dbReference>
<dbReference type="PROSITE" id="PS51722">
    <property type="entry name" value="G_TR_2"/>
    <property type="match status" value="1"/>
</dbReference>
<sequence length="700" mass="77020">MAQDVLTDLKKVRNIGIMAHIDAGKTTTTERILFYTGVNYKIGETHDGASTTDWMEQEQERGITITSAAVTCFWNQNQINIIDTPGHVDFTVEVERSLRVLDGAVAVFDGKEGVEPQSEQVWRQADKYDVPRICFVNKMDKLGADFYFTVQTIKDRLGARPLVIQLPIGAEDTFEGVVDLVEMNAKVWTGETKLGEKYEVKEIPADLAEKAEQYRQELLEAVAESDEALLDKFFGGEELTIDEIKGAIRKMTVNSEAYPVLCGSAFKNKGVQPMLDAVIDYLPSPLDVENVEGHVPGKEDEVINRRPSADEPFAALAFKIAVHPFFGKLTYIRVYSGKVDSGAQVINATKGKKERLGKLFQMHANKENPVPEVSAGHIYAVIGLKDTTTGDTLCDPQNQIVLESMTFPDPVIEVSIEPKTKSDQEKLGTAIQKLAEEDPTFSVKLDPETGQTVIGGMGELHLDILVDRMKREFKVEANVGKPQVAYRETITKTVEKLEYTHKKQTGGSGQFAKVIIALEPFVGEDGAHYEFENKVTGGRVPKEYIPSVDAGAQDAMQYGVLAGYPLVNLKVTLLDGAYHDVDSSEMAFKIAGAQALKEAARKAGPVILEPMMAVEVITPEDYMGDVIGDLNSRRGQIQAMEERSGARVVKALVPLSEMFGYIGDLRSKTQGRANYSMVFDSYAEVPANVSKEIIAKATGE</sequence>
<protein>
    <recommendedName>
        <fullName evidence="1">Elongation factor G</fullName>
        <shortName evidence="1">EF-G</shortName>
    </recommendedName>
</protein>